<feature type="initiator methionine" description="Removed" evidence="1">
    <location>
        <position position="1"/>
    </location>
</feature>
<feature type="chain" id="PRO_0000425715" description="Alcohol oxidase 1">
    <location>
        <begin position="2"/>
        <end position="663"/>
    </location>
</feature>
<feature type="short sequence motif" description="Microbody targeting signal" evidence="3">
    <location>
        <begin position="661"/>
        <end position="663"/>
    </location>
</feature>
<feature type="active site" description="Proton acceptor" evidence="2">
    <location>
        <position position="567"/>
    </location>
</feature>
<feature type="binding site" evidence="1">
    <location>
        <begin position="8"/>
        <end position="38"/>
    </location>
    <ligand>
        <name>FAD</name>
        <dbReference type="ChEBI" id="CHEBI:57692"/>
    </ligand>
</feature>
<feature type="strand" evidence="7">
    <location>
        <begin position="5"/>
        <end position="12"/>
    </location>
</feature>
<feature type="helix" evidence="7">
    <location>
        <begin position="16"/>
        <end position="26"/>
    </location>
</feature>
<feature type="strand" evidence="7">
    <location>
        <begin position="34"/>
        <end position="37"/>
    </location>
</feature>
<feature type="strand" evidence="7">
    <location>
        <begin position="39"/>
        <end position="41"/>
    </location>
</feature>
<feature type="helix" evidence="7">
    <location>
        <begin position="47"/>
        <end position="50"/>
    </location>
</feature>
<feature type="helix" evidence="7">
    <location>
        <begin position="52"/>
        <end position="59"/>
    </location>
</feature>
<feature type="strand" evidence="7">
    <location>
        <begin position="64"/>
        <end position="69"/>
    </location>
</feature>
<feature type="helix" evidence="7">
    <location>
        <begin position="75"/>
        <end position="77"/>
    </location>
</feature>
<feature type="strand" evidence="7">
    <location>
        <begin position="84"/>
        <end position="87"/>
    </location>
</feature>
<feature type="helix" evidence="7">
    <location>
        <begin position="92"/>
        <end position="95"/>
    </location>
</feature>
<feature type="helix" evidence="7">
    <location>
        <begin position="106"/>
        <end position="110"/>
    </location>
</feature>
<feature type="helix" evidence="7">
    <location>
        <begin position="119"/>
        <end position="129"/>
    </location>
</feature>
<feature type="strand" evidence="7">
    <location>
        <begin position="130"/>
        <end position="132"/>
    </location>
</feature>
<feature type="helix" evidence="7">
    <location>
        <begin position="139"/>
        <end position="141"/>
    </location>
</feature>
<feature type="strand" evidence="7">
    <location>
        <begin position="147"/>
        <end position="151"/>
    </location>
</feature>
<feature type="helix" evidence="7">
    <location>
        <begin position="159"/>
        <end position="168"/>
    </location>
</feature>
<feature type="turn" evidence="7">
    <location>
        <begin position="169"/>
        <end position="171"/>
    </location>
</feature>
<feature type="strand" evidence="7">
    <location>
        <begin position="180"/>
        <end position="182"/>
    </location>
</feature>
<feature type="strand" evidence="7">
    <location>
        <begin position="185"/>
        <end position="189"/>
    </location>
</feature>
<feature type="strand" evidence="7">
    <location>
        <begin position="192"/>
        <end position="195"/>
    </location>
</feature>
<feature type="turn" evidence="7">
    <location>
        <begin position="196"/>
        <end position="199"/>
    </location>
</feature>
<feature type="helix" evidence="7">
    <location>
        <begin position="204"/>
        <end position="208"/>
    </location>
</feature>
<feature type="helix" evidence="7">
    <location>
        <begin position="210"/>
        <end position="213"/>
    </location>
</feature>
<feature type="strand" evidence="7">
    <location>
        <begin position="217"/>
        <end position="222"/>
    </location>
</feature>
<feature type="strand" evidence="7">
    <location>
        <begin position="224"/>
        <end position="233"/>
    </location>
</feature>
<feature type="strand" evidence="7">
    <location>
        <begin position="236"/>
        <end position="246"/>
    </location>
</feature>
<feature type="strand" evidence="7">
    <location>
        <begin position="256"/>
        <end position="266"/>
    </location>
</feature>
<feature type="helix" evidence="7">
    <location>
        <begin position="269"/>
        <end position="279"/>
    </location>
</feature>
<feature type="helix" evidence="7">
    <location>
        <begin position="285"/>
        <end position="290"/>
    </location>
</feature>
<feature type="turn" evidence="7">
    <location>
        <begin position="300"/>
        <end position="303"/>
    </location>
</feature>
<feature type="strand" evidence="7">
    <location>
        <begin position="305"/>
        <end position="307"/>
    </location>
</feature>
<feature type="strand" evidence="7">
    <location>
        <begin position="310"/>
        <end position="318"/>
    </location>
</feature>
<feature type="helix" evidence="7">
    <location>
        <begin position="326"/>
        <end position="330"/>
    </location>
</feature>
<feature type="helix" evidence="7">
    <location>
        <begin position="333"/>
        <end position="346"/>
    </location>
</feature>
<feature type="helix" evidence="7">
    <location>
        <begin position="350"/>
        <end position="352"/>
    </location>
</feature>
<feature type="strand" evidence="7">
    <location>
        <begin position="355"/>
        <end position="362"/>
    </location>
</feature>
<feature type="helix" evidence="7">
    <location>
        <begin position="366"/>
        <end position="369"/>
    </location>
</feature>
<feature type="helix" evidence="7">
    <location>
        <begin position="374"/>
        <end position="383"/>
    </location>
</feature>
<feature type="turn" evidence="7">
    <location>
        <begin position="384"/>
        <end position="386"/>
    </location>
</feature>
<feature type="strand" evidence="7">
    <location>
        <begin position="392"/>
        <end position="400"/>
    </location>
</feature>
<feature type="helix" evidence="7">
    <location>
        <begin position="405"/>
        <end position="407"/>
    </location>
</feature>
<feature type="strand" evidence="7">
    <location>
        <begin position="413"/>
        <end position="422"/>
    </location>
</feature>
<feature type="strand" evidence="7">
    <location>
        <begin position="427"/>
        <end position="430"/>
    </location>
</feature>
<feature type="strand" evidence="7">
    <location>
        <begin position="432"/>
        <end position="434"/>
    </location>
</feature>
<feature type="strand" evidence="7">
    <location>
        <begin position="441"/>
        <end position="443"/>
    </location>
</feature>
<feature type="helix" evidence="7">
    <location>
        <begin position="450"/>
        <end position="452"/>
    </location>
</feature>
<feature type="helix" evidence="7">
    <location>
        <begin position="453"/>
        <end position="468"/>
    </location>
</feature>
<feature type="strand" evidence="7">
    <location>
        <begin position="473"/>
        <end position="476"/>
    </location>
</feature>
<feature type="helix" evidence="7">
    <location>
        <begin position="478"/>
        <end position="480"/>
    </location>
</feature>
<feature type="helix" evidence="7">
    <location>
        <begin position="497"/>
        <end position="504"/>
    </location>
</feature>
<feature type="helix" evidence="7">
    <location>
        <begin position="534"/>
        <end position="536"/>
    </location>
</feature>
<feature type="helix" evidence="7">
    <location>
        <begin position="548"/>
        <end position="561"/>
    </location>
</feature>
<feature type="strand" evidence="7">
    <location>
        <begin position="599"/>
        <end position="603"/>
    </location>
</feature>
<feature type="helix" evidence="7">
    <location>
        <begin position="606"/>
        <end position="608"/>
    </location>
</feature>
<feature type="helix" evidence="7">
    <location>
        <begin position="618"/>
        <end position="635"/>
    </location>
</feature>
<feature type="helix" evidence="7">
    <location>
        <begin position="640"/>
        <end position="644"/>
    </location>
</feature>
<feature type="helix" evidence="7">
    <location>
        <begin position="655"/>
        <end position="658"/>
    </location>
</feature>
<sequence>MAIPEEFDILVLGGGSSGSCIAGRLANLDHSLKVGLIEAGENNLNNPWVYLPGIYPRNMKLDSKTASFYTSNPSPHLNGRRAIVPCANVLGGGSSINFMMYTRGSASDYDDFQAEGWKTKDLLPLMKKTETYQRACNNPDIHGFEGPIKVSFGNYTYPVCQDFLRASESQGIPYVDDLEDLVTAHGAEHWLKWINRDTGRRSDSAHAFVHSTMRNHDNLYLICNTKVDKIIVEDGRAAAVRTVPSKPLNPKKPSHKIYRARKQIVLSCGTISSPLVLQRSGFGDPIKLRAAGVKPLVNLPGVGRNFQDHYCFFSPYRIKPQYESFDDFVRGDAEIQKRVFDQWYANGTGPLATNGIEAGVKIRPTPEELSQMDESFQEGYREYFEDKPDKPVMHYSIIAGFFGDHTKIPPGKYMTMFHFLEYPFSRGSIHITSPDPYAAPDFDPGFMNDERDMAPMVWAYKKSRETARRMDHFAGEVTSHHPLFPYSSEARALEMDLETSNAYGGPLNLSAGLAHGSWTQPLKKPTAKNEGHVTSNQVELHPDIEYDEEDDKAIENYIREHTETTWHCLGTCSIGPREGSKIVKWGGVLDHRSNVYGVKGLKVGDLSVCPDNVGCNTYTTALLIGEKTATLVGEDLGYSGEALDMTVPQFKLGTYEKTGLARF</sequence>
<protein>
    <recommendedName>
        <fullName>Alcohol oxidase 1</fullName>
        <shortName>AO 1</shortName>
        <shortName>AOX 1</shortName>
        <ecNumber>1.1.3.13</ecNumber>
    </recommendedName>
    <alternativeName>
        <fullName>Methanol oxidase 1</fullName>
        <shortName>MOX 1</shortName>
    </alternativeName>
</protein>
<dbReference type="EC" id="1.1.3.13"/>
<dbReference type="EMBL" id="U96967">
    <property type="protein sequence ID" value="AAB57849.1"/>
    <property type="molecule type" value="Genomic_DNA"/>
</dbReference>
<dbReference type="EMBL" id="FR839631">
    <property type="protein sequence ID" value="CCA40305.1"/>
    <property type="molecule type" value="Genomic_DNA"/>
</dbReference>
<dbReference type="PDB" id="5HSA">
    <property type="method" value="X-ray"/>
    <property type="resolution" value="2.35 A"/>
    <property type="chains" value="A/B/C/D/E/F/G/H=1-663"/>
</dbReference>
<dbReference type="PDBsum" id="5HSA"/>
<dbReference type="EMDB" id="EMD-8072"/>
<dbReference type="SMR" id="F2QY27"/>
<dbReference type="CAZy" id="AA3">
    <property type="family name" value="Auxiliary Activities 3"/>
</dbReference>
<dbReference type="HOGENOM" id="CLU_002865_5_1_1"/>
<dbReference type="BRENDA" id="1.1.3.13">
    <property type="organism ID" value="4827"/>
</dbReference>
<dbReference type="UniPathway" id="UPA00147"/>
<dbReference type="Proteomes" id="UP000006853">
    <property type="component" value="Chromosome 4"/>
</dbReference>
<dbReference type="GO" id="GO:0005782">
    <property type="term" value="C:peroxisomal matrix"/>
    <property type="evidence" value="ECO:0007669"/>
    <property type="project" value="UniProtKB-SubCell"/>
</dbReference>
<dbReference type="GO" id="GO:0047639">
    <property type="term" value="F:alcohol oxidase activity"/>
    <property type="evidence" value="ECO:0007669"/>
    <property type="project" value="UniProtKB-EC"/>
</dbReference>
<dbReference type="GO" id="GO:0050660">
    <property type="term" value="F:flavin adenine dinucleotide binding"/>
    <property type="evidence" value="ECO:0007669"/>
    <property type="project" value="InterPro"/>
</dbReference>
<dbReference type="GO" id="GO:0046188">
    <property type="term" value="P:methane catabolic process"/>
    <property type="evidence" value="ECO:0007669"/>
    <property type="project" value="UniProtKB-UniPathway"/>
</dbReference>
<dbReference type="GO" id="GO:0015945">
    <property type="term" value="P:methanol metabolic process"/>
    <property type="evidence" value="ECO:0007669"/>
    <property type="project" value="UniProtKB-KW"/>
</dbReference>
<dbReference type="Gene3D" id="3.50.50.60">
    <property type="entry name" value="FAD/NAD(P)-binding domain"/>
    <property type="match status" value="2"/>
</dbReference>
<dbReference type="Gene3D" id="3.30.560.10">
    <property type="entry name" value="Glucose Oxidase, domain 3"/>
    <property type="match status" value="2"/>
</dbReference>
<dbReference type="InterPro" id="IPR036188">
    <property type="entry name" value="FAD/NAD-bd_sf"/>
</dbReference>
<dbReference type="InterPro" id="IPR012132">
    <property type="entry name" value="GMC_OxRdtase"/>
</dbReference>
<dbReference type="InterPro" id="IPR000172">
    <property type="entry name" value="GMC_OxRdtase_N"/>
</dbReference>
<dbReference type="InterPro" id="IPR007867">
    <property type="entry name" value="GMC_OxRtase_C"/>
</dbReference>
<dbReference type="PANTHER" id="PTHR11552">
    <property type="entry name" value="GLUCOSE-METHANOL-CHOLINE GMC OXIDOREDUCTASE"/>
    <property type="match status" value="1"/>
</dbReference>
<dbReference type="PANTHER" id="PTHR11552:SF119">
    <property type="entry name" value="GLUCOSE-METHANOL-CHOLINE OXIDOREDUCTASE N-TERMINAL DOMAIN-CONTAINING PROTEIN"/>
    <property type="match status" value="1"/>
</dbReference>
<dbReference type="Pfam" id="PF05199">
    <property type="entry name" value="GMC_oxred_C"/>
    <property type="match status" value="1"/>
</dbReference>
<dbReference type="Pfam" id="PF00732">
    <property type="entry name" value="GMC_oxred_N"/>
    <property type="match status" value="1"/>
</dbReference>
<dbReference type="PIRSF" id="PIRSF000137">
    <property type="entry name" value="Alcohol_oxidase"/>
    <property type="match status" value="1"/>
</dbReference>
<dbReference type="SUPFAM" id="SSF54373">
    <property type="entry name" value="FAD-linked reductases, C-terminal domain"/>
    <property type="match status" value="1"/>
</dbReference>
<dbReference type="SUPFAM" id="SSF51905">
    <property type="entry name" value="FAD/NAD(P)-binding domain"/>
    <property type="match status" value="1"/>
</dbReference>
<dbReference type="PROSITE" id="PS00623">
    <property type="entry name" value="GMC_OXRED_1"/>
    <property type="match status" value="1"/>
</dbReference>
<organism>
    <name type="scientific">Komagataella phaffii (strain ATCC 76273 / CBS 7435 / CECT 11047 / NRRL Y-11430 / Wegner 21-1)</name>
    <name type="common">Yeast</name>
    <name type="synonym">Pichia pastoris</name>
    <dbReference type="NCBI Taxonomy" id="981350"/>
    <lineage>
        <taxon>Eukaryota</taxon>
        <taxon>Fungi</taxon>
        <taxon>Dikarya</taxon>
        <taxon>Ascomycota</taxon>
        <taxon>Saccharomycotina</taxon>
        <taxon>Pichiomycetes</taxon>
        <taxon>Pichiales</taxon>
        <taxon>Pichiaceae</taxon>
        <taxon>Komagataella</taxon>
    </lineage>
</organism>
<accession>F2QY27</accession>
<accession>Q9URI8</accession>
<name>ALOX1_KOMPC</name>
<keyword id="KW-0002">3D-structure</keyword>
<keyword id="KW-0274">FAD</keyword>
<keyword id="KW-0285">Flavoprotein</keyword>
<keyword id="KW-0485">Methanol utilization</keyword>
<keyword id="KW-0560">Oxidoreductase</keyword>
<keyword id="KW-0576">Peroxisome</keyword>
<evidence type="ECO:0000250" key="1"/>
<evidence type="ECO:0000250" key="2">
    <source>
        <dbReference type="UniProtKB" id="E4QP00"/>
    </source>
</evidence>
<evidence type="ECO:0000255" key="3"/>
<evidence type="ECO:0000269" key="4">
    <source>
    </source>
</evidence>
<evidence type="ECO:0000269" key="5">
    <source>
    </source>
</evidence>
<evidence type="ECO:0000305" key="6"/>
<evidence type="ECO:0007829" key="7">
    <source>
        <dbReference type="PDB" id="5HSA"/>
    </source>
</evidence>
<gene>
    <name type="primary">AOX1</name>
    <name type="ordered locus">PP7435_Chr4-0130</name>
</gene>
<reference key="1">
    <citation type="journal article" date="1989" name="Yeast">
        <title>Structural comparison of the Pichia pastoris alcohol oxidase genes.</title>
        <authorList>
            <person name="Koutz P."/>
            <person name="Davis G.R."/>
            <person name="Stillman C."/>
            <person name="Barringer K."/>
            <person name="Cregg J."/>
            <person name="Thill G."/>
        </authorList>
    </citation>
    <scope>NUCLEOTIDE SEQUENCE [GENOMIC DNA]</scope>
    <source>
        <strain>ATCC 76273 / CBS 7435 / CECT 11047 / NRRL Y-11430 / Wegner 21-1</strain>
    </source>
</reference>
<reference key="2">
    <citation type="journal article" date="2011" name="J. Biotechnol.">
        <title>High-quality genome sequence of Pichia pastoris CBS7435.</title>
        <authorList>
            <person name="Kueberl A."/>
            <person name="Schneider J."/>
            <person name="Thallinger G.G."/>
            <person name="Anderl I."/>
            <person name="Wibberg D."/>
            <person name="Hajek T."/>
            <person name="Jaenicke S."/>
            <person name="Brinkrolf K."/>
            <person name="Goesmann A."/>
            <person name="Szczepanowski R."/>
            <person name="Puehler A."/>
            <person name="Schwab H."/>
            <person name="Glieder A."/>
            <person name="Pichler H."/>
        </authorList>
    </citation>
    <scope>NUCLEOTIDE SEQUENCE [LARGE SCALE GENOMIC DNA]</scope>
    <source>
        <strain>ATCC 76273 / CBS 7435 / CECT 11047 / NRRL Y-11430 / Wegner 21-1</strain>
    </source>
</reference>
<reference key="3">
    <citation type="journal article" date="2016" name="FEMS Yeast Res.">
        <title>Curation of the genome annotation of Pichia pastoris (Komagataella phaffii) CBS7435 from gene level to protein function.</title>
        <authorList>
            <person name="Valli M."/>
            <person name="Tatto N.E."/>
            <person name="Peymann A."/>
            <person name="Gruber C."/>
            <person name="Landes N."/>
            <person name="Ekker H."/>
            <person name="Thallinger G.G."/>
            <person name="Mattanovich D."/>
            <person name="Gasser B."/>
            <person name="Graf A.B."/>
        </authorList>
    </citation>
    <scope>GENOME REANNOTATION</scope>
    <source>
        <strain>ATCC 76273 / CBS 7435 / CECT 11047 / NRRL Y-11430 / Wegner 21-1</strain>
    </source>
</reference>
<reference key="4">
    <citation type="journal article" date="1989" name="Mol. Cell. Biol.">
        <title>Functional characterization of the two alcohol oxidase genes from the yeast Pichia pastoris.</title>
        <authorList>
            <person name="Cregg J.M."/>
            <person name="Madden K.R."/>
            <person name="Barringer K.J."/>
            <person name="Thill G.P."/>
            <person name="Stillman C.A."/>
        </authorList>
    </citation>
    <scope>FUNCTION</scope>
    <scope>INDUCTION BY METHANOL</scope>
    <source>
        <strain>ATCC 76273 / CBS 7435 / CECT 11047 / NRRL Y-11430 / Wegner 21-1</strain>
    </source>
</reference>
<reference key="5">
    <citation type="journal article" date="1997" name="J. Cell Biol.">
        <title>Peroxisomal targeting, import, and assembly of alcohol oxidase in Pichia pastoris.</title>
        <authorList>
            <person name="Waterham H.R."/>
            <person name="Russell K.A."/>
            <person name="Vries Y."/>
            <person name="Cregg J.M."/>
        </authorList>
    </citation>
    <scope>FUNCTION</scope>
    <scope>SUBCELLULAR LOCATION</scope>
    <scope>SUBUNIT</scope>
    <source>
        <strain>ATCC 76273 / CBS 7435 / CECT 11047 / NRRL Y-11430 / Wegner 21-1</strain>
        <strain>GS115 / ATCC 20864</strain>
    </source>
</reference>
<comment type="function">
    <text evidence="4 5">Major isoform of alcohol oxidase, which catalyzes the oxidation of methanol to formaldehyde and hydrogen peroxide, the first step in the methanol utilization pathway of methylotrophic yeasts.</text>
</comment>
<comment type="catalytic activity">
    <reaction>
        <text>a primary alcohol + O2 = an aldehyde + H2O2</text>
        <dbReference type="Rhea" id="RHEA:19829"/>
        <dbReference type="ChEBI" id="CHEBI:15379"/>
        <dbReference type="ChEBI" id="CHEBI:15734"/>
        <dbReference type="ChEBI" id="CHEBI:16240"/>
        <dbReference type="ChEBI" id="CHEBI:17478"/>
        <dbReference type="EC" id="1.1.3.13"/>
    </reaction>
</comment>
<comment type="cofactor">
    <cofactor evidence="1">
        <name>FAD</name>
        <dbReference type="ChEBI" id="CHEBI:57692"/>
    </cofactor>
</comment>
<comment type="pathway">
    <text>Energy metabolism; methane degradation.</text>
</comment>
<comment type="subunit">
    <text evidence="5">Homooctamer.</text>
</comment>
<comment type="subcellular location">
    <subcellularLocation>
        <location evidence="1">Peroxisome matrix</location>
    </subcellularLocation>
</comment>
<comment type="induction">
    <text evidence="4">Induced by methanol. Subject to strong carbon catabolite repression.</text>
</comment>
<comment type="domain">
    <text evidence="1">The C-terminal peroxisomal targeting signal (PTS) is essential for the efficient targeting and import of AOX into peroxisomes via the PTS1 pathway.</text>
</comment>
<comment type="similarity">
    <text evidence="6">Belongs to the GMC oxidoreductase family.</text>
</comment>
<proteinExistence type="evidence at protein level"/>